<accession>B0K5S2</accession>
<comment type="subunit">
    <text evidence="1">Part of the 50S ribosomal subunit. Contacts protein L32.</text>
</comment>
<comment type="similarity">
    <text evidence="1">Belongs to the bacterial ribosomal protein bL17 family.</text>
</comment>
<protein>
    <recommendedName>
        <fullName evidence="1">Large ribosomal subunit protein bL17</fullName>
    </recommendedName>
    <alternativeName>
        <fullName evidence="2">50S ribosomal protein L17</fullName>
    </alternativeName>
</protein>
<feature type="chain" id="PRO_1000144498" description="Large ribosomal subunit protein bL17">
    <location>
        <begin position="1"/>
        <end position="112"/>
    </location>
</feature>
<dbReference type="EMBL" id="CP000923">
    <property type="protein sequence ID" value="ABY92198.1"/>
    <property type="molecule type" value="Genomic_DNA"/>
</dbReference>
<dbReference type="RefSeq" id="WP_003868588.1">
    <property type="nucleotide sequence ID" value="NC_010320.1"/>
</dbReference>
<dbReference type="SMR" id="B0K5S2"/>
<dbReference type="KEGG" id="tex:Teth514_0896"/>
<dbReference type="HOGENOM" id="CLU_074407_2_2_9"/>
<dbReference type="Proteomes" id="UP000002155">
    <property type="component" value="Chromosome"/>
</dbReference>
<dbReference type="GO" id="GO:0022625">
    <property type="term" value="C:cytosolic large ribosomal subunit"/>
    <property type="evidence" value="ECO:0007669"/>
    <property type="project" value="TreeGrafter"/>
</dbReference>
<dbReference type="GO" id="GO:0003735">
    <property type="term" value="F:structural constituent of ribosome"/>
    <property type="evidence" value="ECO:0007669"/>
    <property type="project" value="InterPro"/>
</dbReference>
<dbReference type="GO" id="GO:0006412">
    <property type="term" value="P:translation"/>
    <property type="evidence" value="ECO:0007669"/>
    <property type="project" value="UniProtKB-UniRule"/>
</dbReference>
<dbReference type="FunFam" id="3.90.1030.10:FF:000002">
    <property type="entry name" value="50S ribosomal protein L17"/>
    <property type="match status" value="1"/>
</dbReference>
<dbReference type="Gene3D" id="3.90.1030.10">
    <property type="entry name" value="Ribosomal protein L17"/>
    <property type="match status" value="1"/>
</dbReference>
<dbReference type="HAMAP" id="MF_01368">
    <property type="entry name" value="Ribosomal_bL17"/>
    <property type="match status" value="1"/>
</dbReference>
<dbReference type="InterPro" id="IPR000456">
    <property type="entry name" value="Ribosomal_bL17"/>
</dbReference>
<dbReference type="InterPro" id="IPR047859">
    <property type="entry name" value="Ribosomal_bL17_CS"/>
</dbReference>
<dbReference type="InterPro" id="IPR036373">
    <property type="entry name" value="Ribosomal_bL17_sf"/>
</dbReference>
<dbReference type="NCBIfam" id="TIGR00059">
    <property type="entry name" value="L17"/>
    <property type="match status" value="1"/>
</dbReference>
<dbReference type="PANTHER" id="PTHR14413:SF16">
    <property type="entry name" value="LARGE RIBOSOMAL SUBUNIT PROTEIN BL17M"/>
    <property type="match status" value="1"/>
</dbReference>
<dbReference type="PANTHER" id="PTHR14413">
    <property type="entry name" value="RIBOSOMAL PROTEIN L17"/>
    <property type="match status" value="1"/>
</dbReference>
<dbReference type="Pfam" id="PF01196">
    <property type="entry name" value="Ribosomal_L17"/>
    <property type="match status" value="1"/>
</dbReference>
<dbReference type="SUPFAM" id="SSF64263">
    <property type="entry name" value="Prokaryotic ribosomal protein L17"/>
    <property type="match status" value="1"/>
</dbReference>
<dbReference type="PROSITE" id="PS01167">
    <property type="entry name" value="RIBOSOMAL_L17"/>
    <property type="match status" value="1"/>
</dbReference>
<evidence type="ECO:0000255" key="1">
    <source>
        <dbReference type="HAMAP-Rule" id="MF_01368"/>
    </source>
</evidence>
<evidence type="ECO:0000305" key="2"/>
<keyword id="KW-0687">Ribonucleoprotein</keyword>
<keyword id="KW-0689">Ribosomal protein</keyword>
<organism>
    <name type="scientific">Thermoanaerobacter sp. (strain X514)</name>
    <dbReference type="NCBI Taxonomy" id="399726"/>
    <lineage>
        <taxon>Bacteria</taxon>
        <taxon>Bacillati</taxon>
        <taxon>Bacillota</taxon>
        <taxon>Clostridia</taxon>
        <taxon>Thermoanaerobacterales</taxon>
        <taxon>Thermoanaerobacteraceae</taxon>
        <taxon>Thermoanaerobacter</taxon>
    </lineage>
</organism>
<proteinExistence type="inferred from homology"/>
<name>RL17_THEPX</name>
<sequence>MGYRKLGRPSDQRRAMLRNLVTDFLKYGRITTTEARAKEVRSISEKMITLGKRGDLHARRQALAYILDESVVKKLFDEIAPKYKDRQGGYTRILKLGPRRGDGAPLVIIELV</sequence>
<gene>
    <name evidence="1" type="primary">rplQ</name>
    <name type="ordered locus">Teth514_0896</name>
</gene>
<reference key="1">
    <citation type="submission" date="2008-01" db="EMBL/GenBank/DDBJ databases">
        <title>Complete sequence of Thermoanaerobacter sp. X514.</title>
        <authorList>
            <consortium name="US DOE Joint Genome Institute"/>
            <person name="Copeland A."/>
            <person name="Lucas S."/>
            <person name="Lapidus A."/>
            <person name="Barry K."/>
            <person name="Glavina del Rio T."/>
            <person name="Dalin E."/>
            <person name="Tice H."/>
            <person name="Pitluck S."/>
            <person name="Bruce D."/>
            <person name="Goodwin L."/>
            <person name="Saunders E."/>
            <person name="Brettin T."/>
            <person name="Detter J.C."/>
            <person name="Han C."/>
            <person name="Schmutz J."/>
            <person name="Larimer F."/>
            <person name="Land M."/>
            <person name="Hauser L."/>
            <person name="Kyrpides N."/>
            <person name="Kim E."/>
            <person name="Hemme C."/>
            <person name="Fields M.W."/>
            <person name="He Z."/>
            <person name="Zhou J."/>
            <person name="Richardson P."/>
        </authorList>
    </citation>
    <scope>NUCLEOTIDE SEQUENCE [LARGE SCALE GENOMIC DNA]</scope>
    <source>
        <strain>X514</strain>
    </source>
</reference>